<accession>Q4UNK5</accession>
<comment type="function">
    <text evidence="1">Bifunctional serine/threonine kinase and phosphorylase involved in the regulation of the pyruvate, phosphate dikinase (PPDK) by catalyzing its phosphorylation/dephosphorylation.</text>
</comment>
<comment type="catalytic activity">
    <reaction evidence="1">
        <text>N(tele)-phospho-L-histidyl/L-threonyl-[pyruvate, phosphate dikinase] + ADP = N(tele)-phospho-L-histidyl/O-phospho-L-threonyl-[pyruvate, phosphate dikinase] + AMP + H(+)</text>
        <dbReference type="Rhea" id="RHEA:43692"/>
        <dbReference type="Rhea" id="RHEA-COMP:10650"/>
        <dbReference type="Rhea" id="RHEA-COMP:10651"/>
        <dbReference type="ChEBI" id="CHEBI:15378"/>
        <dbReference type="ChEBI" id="CHEBI:30013"/>
        <dbReference type="ChEBI" id="CHEBI:61977"/>
        <dbReference type="ChEBI" id="CHEBI:83586"/>
        <dbReference type="ChEBI" id="CHEBI:456215"/>
        <dbReference type="ChEBI" id="CHEBI:456216"/>
        <dbReference type="EC" id="2.7.11.32"/>
    </reaction>
</comment>
<comment type="catalytic activity">
    <reaction evidence="1">
        <text>N(tele)-phospho-L-histidyl/O-phospho-L-threonyl-[pyruvate, phosphate dikinase] + phosphate + H(+) = N(tele)-phospho-L-histidyl/L-threonyl-[pyruvate, phosphate dikinase] + diphosphate</text>
        <dbReference type="Rhea" id="RHEA:43696"/>
        <dbReference type="Rhea" id="RHEA-COMP:10650"/>
        <dbReference type="Rhea" id="RHEA-COMP:10651"/>
        <dbReference type="ChEBI" id="CHEBI:15378"/>
        <dbReference type="ChEBI" id="CHEBI:30013"/>
        <dbReference type="ChEBI" id="CHEBI:33019"/>
        <dbReference type="ChEBI" id="CHEBI:43474"/>
        <dbReference type="ChEBI" id="CHEBI:61977"/>
        <dbReference type="ChEBI" id="CHEBI:83586"/>
        <dbReference type="EC" id="2.7.4.27"/>
    </reaction>
</comment>
<comment type="similarity">
    <text evidence="1">Belongs to the pyruvate, phosphate/water dikinase regulatory protein family. PDRP subfamily.</text>
</comment>
<evidence type="ECO:0000255" key="1">
    <source>
        <dbReference type="HAMAP-Rule" id="MF_00921"/>
    </source>
</evidence>
<gene>
    <name type="ordered locus">RF_0001</name>
</gene>
<reference key="1">
    <citation type="journal article" date="2005" name="PLoS Biol.">
        <title>The genome sequence of Rickettsia felis identifies the first putative conjugative plasmid in an obligate intracellular parasite.</title>
        <authorList>
            <person name="Ogata H."/>
            <person name="Renesto P."/>
            <person name="Audic S."/>
            <person name="Robert C."/>
            <person name="Blanc G."/>
            <person name="Fournier P.-E."/>
            <person name="Parinello H."/>
            <person name="Claverie J.-M."/>
            <person name="Raoult D."/>
        </authorList>
    </citation>
    <scope>NUCLEOTIDE SEQUENCE [LARGE SCALE GENOMIC DNA]</scope>
    <source>
        <strain>ATCC VR-1525 / URRWXCal2</strain>
    </source>
</reference>
<feature type="chain" id="PRO_0000196702" description="Putative pyruvate, phosphate dikinase regulatory protein">
    <location>
        <begin position="1"/>
        <end position="273"/>
    </location>
</feature>
<feature type="binding site" evidence="1">
    <location>
        <begin position="149"/>
        <end position="156"/>
    </location>
    <ligand>
        <name>ADP</name>
        <dbReference type="ChEBI" id="CHEBI:456216"/>
    </ligand>
</feature>
<name>PDRP_RICFE</name>
<keyword id="KW-0418">Kinase</keyword>
<keyword id="KW-0547">Nucleotide-binding</keyword>
<keyword id="KW-0723">Serine/threonine-protein kinase</keyword>
<keyword id="KW-0808">Transferase</keyword>
<sequence>MTKLIIHLVSDSSVQTAKYAANSAFAQFTSIKPKLYHWPMIRNLELLNEVLSKIESKHGLVLYTIADQELRKALTKFCYELKIPCISVIGKIIKEISVFSGIEIEKEQNYNYKFDKTYFDTLNAIDYAIRHDDGQMLNELSEADIILIGPSRTSKTPTSVFLAYNGLKAANIPYVYNCPFPDFIEKDIDLLVVGLVINPNRLIEIREARLNLLQINENKSYTDFNIVQKECLEVRKICDQRNWPVIDVSTRSIEETAALIMRIYYNRKNKYNK</sequence>
<proteinExistence type="inferred from homology"/>
<protein>
    <recommendedName>
        <fullName evidence="1">Putative pyruvate, phosphate dikinase regulatory protein</fullName>
        <shortName evidence="1">PPDK regulatory protein</shortName>
        <ecNumber evidence="1">2.7.11.32</ecNumber>
        <ecNumber evidence="1">2.7.4.27</ecNumber>
    </recommendedName>
</protein>
<dbReference type="EC" id="2.7.11.32" evidence="1"/>
<dbReference type="EC" id="2.7.4.27" evidence="1"/>
<dbReference type="EMBL" id="CP000053">
    <property type="protein sequence ID" value="AAY60852.1"/>
    <property type="molecule type" value="Genomic_DNA"/>
</dbReference>
<dbReference type="SMR" id="Q4UNK5"/>
<dbReference type="STRING" id="315456.RF_0001"/>
<dbReference type="KEGG" id="rfe:RF_0001"/>
<dbReference type="eggNOG" id="COG1806">
    <property type="taxonomic scope" value="Bacteria"/>
</dbReference>
<dbReference type="HOGENOM" id="CLU_046206_2_0_5"/>
<dbReference type="OrthoDB" id="9782201at2"/>
<dbReference type="Proteomes" id="UP000008548">
    <property type="component" value="Chromosome"/>
</dbReference>
<dbReference type="GO" id="GO:0043531">
    <property type="term" value="F:ADP binding"/>
    <property type="evidence" value="ECO:0007669"/>
    <property type="project" value="UniProtKB-UniRule"/>
</dbReference>
<dbReference type="GO" id="GO:0005524">
    <property type="term" value="F:ATP binding"/>
    <property type="evidence" value="ECO:0007669"/>
    <property type="project" value="InterPro"/>
</dbReference>
<dbReference type="GO" id="GO:0016776">
    <property type="term" value="F:phosphotransferase activity, phosphate group as acceptor"/>
    <property type="evidence" value="ECO:0007669"/>
    <property type="project" value="UniProtKB-UniRule"/>
</dbReference>
<dbReference type="GO" id="GO:0004674">
    <property type="term" value="F:protein serine/threonine kinase activity"/>
    <property type="evidence" value="ECO:0007669"/>
    <property type="project" value="UniProtKB-UniRule"/>
</dbReference>
<dbReference type="HAMAP" id="MF_00921">
    <property type="entry name" value="PDRP"/>
    <property type="match status" value="1"/>
</dbReference>
<dbReference type="InterPro" id="IPR005177">
    <property type="entry name" value="Kinase-pyrophosphorylase"/>
</dbReference>
<dbReference type="InterPro" id="IPR026565">
    <property type="entry name" value="PPDK_reg"/>
</dbReference>
<dbReference type="NCBIfam" id="NF003742">
    <property type="entry name" value="PRK05339.1"/>
    <property type="match status" value="1"/>
</dbReference>
<dbReference type="PANTHER" id="PTHR31756">
    <property type="entry name" value="PYRUVATE, PHOSPHATE DIKINASE REGULATORY PROTEIN 1, CHLOROPLASTIC"/>
    <property type="match status" value="1"/>
</dbReference>
<dbReference type="PANTHER" id="PTHR31756:SF3">
    <property type="entry name" value="PYRUVATE, PHOSPHATE DIKINASE REGULATORY PROTEIN 1, CHLOROPLASTIC"/>
    <property type="match status" value="1"/>
</dbReference>
<dbReference type="Pfam" id="PF03618">
    <property type="entry name" value="Kinase-PPPase"/>
    <property type="match status" value="1"/>
</dbReference>
<organism>
    <name type="scientific">Rickettsia felis (strain ATCC VR-1525 / URRWXCal2)</name>
    <name type="common">Rickettsia azadi</name>
    <dbReference type="NCBI Taxonomy" id="315456"/>
    <lineage>
        <taxon>Bacteria</taxon>
        <taxon>Pseudomonadati</taxon>
        <taxon>Pseudomonadota</taxon>
        <taxon>Alphaproteobacteria</taxon>
        <taxon>Rickettsiales</taxon>
        <taxon>Rickettsiaceae</taxon>
        <taxon>Rickettsieae</taxon>
        <taxon>Rickettsia</taxon>
        <taxon>spotted fever group</taxon>
    </lineage>
</organism>